<comment type="function">
    <text evidence="1">Catalyzes the facilitated diffusion of 2-acyl-glycero-3-phosphoethanolamine (2-acyl-GPE) into the cell.</text>
</comment>
<comment type="subcellular location">
    <subcellularLocation>
        <location evidence="1">Cell inner membrane</location>
        <topology evidence="1">Multi-pass membrane protein</topology>
    </subcellularLocation>
</comment>
<comment type="similarity">
    <text evidence="1">Belongs to the major facilitator superfamily. LplT (TC 2.A.1.42) family.</text>
</comment>
<keyword id="KW-0997">Cell inner membrane</keyword>
<keyword id="KW-1003">Cell membrane</keyword>
<keyword id="KW-0445">Lipid transport</keyword>
<keyword id="KW-0472">Membrane</keyword>
<keyword id="KW-0812">Transmembrane</keyword>
<keyword id="KW-1133">Transmembrane helix</keyword>
<keyword id="KW-0813">Transport</keyword>
<sequence>MSQDVLADKPLLSRSMVAVLCAQFFSAFGDNALLFATLALIKQQLYPDWSQPILQMAFVATYIVLAPFVGQIADGFAKGRVMMVANGLKLAGALVICFGLNPFLGYSLVGVGAAAYSPAKYGILGEITSGEQLVKANGMMEASTIAAILLGSVAGGILADWHLMAALGVCALVYAIAVIANLFIPRLAAARSGASWRPRAMTGSFFTACRLLWQDSETRFSLAGTSLFWGAGVTLRFLLVLWVPVALGIADNATPTLLNAMVAIGIVVGAGAAARFVTLKTVKRCLPAGVLIGVMVTIFSLQNSMPMAYLLLIIIGILGGFFVVPLNALLQERGKHSVGAGNAIAVQNLGENTAMLFMLGLYSLVVKLGAPVVAVGVGFGVVFALAIALLWGWQWRQQRQKTRQPE</sequence>
<evidence type="ECO:0000255" key="1">
    <source>
        <dbReference type="HAMAP-Rule" id="MF_01585"/>
    </source>
</evidence>
<protein>
    <recommendedName>
        <fullName evidence="1">Lysophospholipid transporter LplT</fullName>
    </recommendedName>
</protein>
<organism>
    <name type="scientific">Yersinia pestis bv. Antiqua (strain Antiqua)</name>
    <dbReference type="NCBI Taxonomy" id="360102"/>
    <lineage>
        <taxon>Bacteria</taxon>
        <taxon>Pseudomonadati</taxon>
        <taxon>Pseudomonadota</taxon>
        <taxon>Gammaproteobacteria</taxon>
        <taxon>Enterobacterales</taxon>
        <taxon>Yersiniaceae</taxon>
        <taxon>Yersinia</taxon>
    </lineage>
</organism>
<accession>Q1CAS7</accession>
<gene>
    <name evidence="1" type="primary">lplT</name>
    <name type="ordered locus">YPA_0477</name>
</gene>
<feature type="chain" id="PRO_0000309841" description="Lysophospholipid transporter LplT">
    <location>
        <begin position="1"/>
        <end position="406"/>
    </location>
</feature>
<feature type="transmembrane region" description="Helical" evidence="1">
    <location>
        <begin position="16"/>
        <end position="36"/>
    </location>
</feature>
<feature type="transmembrane region" description="Helical" evidence="1">
    <location>
        <begin position="53"/>
        <end position="73"/>
    </location>
</feature>
<feature type="transmembrane region" description="Helical" evidence="1">
    <location>
        <begin position="91"/>
        <end position="111"/>
    </location>
</feature>
<feature type="transmembrane region" description="Helical" evidence="1">
    <location>
        <begin position="139"/>
        <end position="159"/>
    </location>
</feature>
<feature type="transmembrane region" description="Helical" evidence="1">
    <location>
        <begin position="164"/>
        <end position="184"/>
    </location>
</feature>
<feature type="transmembrane region" description="Helical" evidence="1">
    <location>
        <begin position="227"/>
        <end position="247"/>
    </location>
</feature>
<feature type="transmembrane region" description="Helical" evidence="1">
    <location>
        <begin position="253"/>
        <end position="273"/>
    </location>
</feature>
<feature type="transmembrane region" description="Helical" evidence="1">
    <location>
        <begin position="285"/>
        <end position="305"/>
    </location>
</feature>
<feature type="transmembrane region" description="Helical" evidence="1">
    <location>
        <begin position="310"/>
        <end position="330"/>
    </location>
</feature>
<feature type="transmembrane region" description="Helical" evidence="1">
    <location>
        <begin position="349"/>
        <end position="369"/>
    </location>
</feature>
<feature type="transmembrane region" description="Helical" evidence="1">
    <location>
        <begin position="372"/>
        <end position="392"/>
    </location>
</feature>
<dbReference type="EMBL" id="CP000308">
    <property type="protein sequence ID" value="ABG12445.1"/>
    <property type="molecule type" value="Genomic_DNA"/>
</dbReference>
<dbReference type="RefSeq" id="WP_002209842.1">
    <property type="nucleotide sequence ID" value="NZ_CP009906.1"/>
</dbReference>
<dbReference type="SMR" id="Q1CAS7"/>
<dbReference type="GeneID" id="96662409"/>
<dbReference type="KEGG" id="ypa:YPA_0477"/>
<dbReference type="Proteomes" id="UP000001971">
    <property type="component" value="Chromosome"/>
</dbReference>
<dbReference type="GO" id="GO:0005886">
    <property type="term" value="C:plasma membrane"/>
    <property type="evidence" value="ECO:0007669"/>
    <property type="project" value="UniProtKB-SubCell"/>
</dbReference>
<dbReference type="GO" id="GO:0051978">
    <property type="term" value="F:lysophospholipid:sodium symporter activity"/>
    <property type="evidence" value="ECO:0007669"/>
    <property type="project" value="InterPro"/>
</dbReference>
<dbReference type="CDD" id="cd06173">
    <property type="entry name" value="MFS_MefA_like"/>
    <property type="match status" value="1"/>
</dbReference>
<dbReference type="Gene3D" id="1.20.1250.20">
    <property type="entry name" value="MFS general substrate transporter like domains"/>
    <property type="match status" value="1"/>
</dbReference>
<dbReference type="HAMAP" id="MF_01585">
    <property type="entry name" value="MFS_LplT"/>
    <property type="match status" value="1"/>
</dbReference>
<dbReference type="InterPro" id="IPR023727">
    <property type="entry name" value="LysoPLipid__transptr_LplT"/>
</dbReference>
<dbReference type="InterPro" id="IPR011701">
    <property type="entry name" value="MFS"/>
</dbReference>
<dbReference type="InterPro" id="IPR036259">
    <property type="entry name" value="MFS_trans_sf"/>
</dbReference>
<dbReference type="NCBIfam" id="NF008397">
    <property type="entry name" value="PRK11195.1"/>
    <property type="match status" value="1"/>
</dbReference>
<dbReference type="PANTHER" id="PTHR43266">
    <property type="entry name" value="MACROLIDE-EFFLUX PROTEIN"/>
    <property type="match status" value="1"/>
</dbReference>
<dbReference type="PANTHER" id="PTHR43266:SF2">
    <property type="entry name" value="MAJOR FACILITATOR SUPERFAMILY (MFS) PROFILE DOMAIN-CONTAINING PROTEIN"/>
    <property type="match status" value="1"/>
</dbReference>
<dbReference type="Pfam" id="PF07690">
    <property type="entry name" value="MFS_1"/>
    <property type="match status" value="1"/>
</dbReference>
<dbReference type="SUPFAM" id="SSF103473">
    <property type="entry name" value="MFS general substrate transporter"/>
    <property type="match status" value="1"/>
</dbReference>
<name>LPLT_YERPA</name>
<proteinExistence type="inferred from homology"/>
<reference key="1">
    <citation type="journal article" date="2006" name="J. Bacteriol.">
        <title>Complete genome sequence of Yersinia pestis strains Antiqua and Nepal516: evidence of gene reduction in an emerging pathogen.</title>
        <authorList>
            <person name="Chain P.S.G."/>
            <person name="Hu P."/>
            <person name="Malfatti S.A."/>
            <person name="Radnedge L."/>
            <person name="Larimer F."/>
            <person name="Vergez L.M."/>
            <person name="Worsham P."/>
            <person name="Chu M.C."/>
            <person name="Andersen G.L."/>
        </authorList>
    </citation>
    <scope>NUCLEOTIDE SEQUENCE [LARGE SCALE GENOMIC DNA]</scope>
    <source>
        <strain>Antiqua</strain>
    </source>
</reference>